<dbReference type="EC" id="6.1.1.16" evidence="1"/>
<dbReference type="EMBL" id="CP000560">
    <property type="protein sequence ID" value="ABS72542.1"/>
    <property type="molecule type" value="Genomic_DNA"/>
</dbReference>
<dbReference type="RefSeq" id="WP_011996190.1">
    <property type="nucleotide sequence ID" value="NC_009725.2"/>
</dbReference>
<dbReference type="SMR" id="A7Z0L6"/>
<dbReference type="GeneID" id="93079258"/>
<dbReference type="KEGG" id="bay:RBAM_001190"/>
<dbReference type="HOGENOM" id="CLU_013528_0_1_9"/>
<dbReference type="Proteomes" id="UP000001120">
    <property type="component" value="Chromosome"/>
</dbReference>
<dbReference type="GO" id="GO:0005829">
    <property type="term" value="C:cytosol"/>
    <property type="evidence" value="ECO:0007669"/>
    <property type="project" value="TreeGrafter"/>
</dbReference>
<dbReference type="GO" id="GO:0005524">
    <property type="term" value="F:ATP binding"/>
    <property type="evidence" value="ECO:0007669"/>
    <property type="project" value="UniProtKB-UniRule"/>
</dbReference>
<dbReference type="GO" id="GO:0004817">
    <property type="term" value="F:cysteine-tRNA ligase activity"/>
    <property type="evidence" value="ECO:0007669"/>
    <property type="project" value="UniProtKB-UniRule"/>
</dbReference>
<dbReference type="GO" id="GO:0008270">
    <property type="term" value="F:zinc ion binding"/>
    <property type="evidence" value="ECO:0007669"/>
    <property type="project" value="UniProtKB-UniRule"/>
</dbReference>
<dbReference type="GO" id="GO:0006423">
    <property type="term" value="P:cysteinyl-tRNA aminoacylation"/>
    <property type="evidence" value="ECO:0007669"/>
    <property type="project" value="UniProtKB-UniRule"/>
</dbReference>
<dbReference type="CDD" id="cd00672">
    <property type="entry name" value="CysRS_core"/>
    <property type="match status" value="1"/>
</dbReference>
<dbReference type="FunFam" id="1.20.120.1910:FF:000002">
    <property type="entry name" value="Cysteine--tRNA ligase"/>
    <property type="match status" value="1"/>
</dbReference>
<dbReference type="FunFam" id="3.40.50.620:FF:000009">
    <property type="entry name" value="Cysteine--tRNA ligase"/>
    <property type="match status" value="1"/>
</dbReference>
<dbReference type="Gene3D" id="1.20.120.1910">
    <property type="entry name" value="Cysteine-tRNA ligase, C-terminal anti-codon recognition domain"/>
    <property type="match status" value="1"/>
</dbReference>
<dbReference type="Gene3D" id="3.40.50.620">
    <property type="entry name" value="HUPs"/>
    <property type="match status" value="1"/>
</dbReference>
<dbReference type="HAMAP" id="MF_00041">
    <property type="entry name" value="Cys_tRNA_synth"/>
    <property type="match status" value="1"/>
</dbReference>
<dbReference type="InterPro" id="IPR015803">
    <property type="entry name" value="Cys-tRNA-ligase"/>
</dbReference>
<dbReference type="InterPro" id="IPR015273">
    <property type="entry name" value="Cys-tRNA-synt_Ia_DALR"/>
</dbReference>
<dbReference type="InterPro" id="IPR024909">
    <property type="entry name" value="Cys-tRNA/MSH_ligase"/>
</dbReference>
<dbReference type="InterPro" id="IPR014729">
    <property type="entry name" value="Rossmann-like_a/b/a_fold"/>
</dbReference>
<dbReference type="InterPro" id="IPR032678">
    <property type="entry name" value="tRNA-synt_1_cat_dom"/>
</dbReference>
<dbReference type="InterPro" id="IPR009080">
    <property type="entry name" value="tRNAsynth_Ia_anticodon-bd"/>
</dbReference>
<dbReference type="NCBIfam" id="TIGR00435">
    <property type="entry name" value="cysS"/>
    <property type="match status" value="1"/>
</dbReference>
<dbReference type="PANTHER" id="PTHR10890:SF3">
    <property type="entry name" value="CYSTEINE--TRNA LIGASE, CYTOPLASMIC"/>
    <property type="match status" value="1"/>
</dbReference>
<dbReference type="PANTHER" id="PTHR10890">
    <property type="entry name" value="CYSTEINYL-TRNA SYNTHETASE"/>
    <property type="match status" value="1"/>
</dbReference>
<dbReference type="Pfam" id="PF09190">
    <property type="entry name" value="DALR_2"/>
    <property type="match status" value="1"/>
</dbReference>
<dbReference type="Pfam" id="PF01406">
    <property type="entry name" value="tRNA-synt_1e"/>
    <property type="match status" value="1"/>
</dbReference>
<dbReference type="PRINTS" id="PR00983">
    <property type="entry name" value="TRNASYNTHCYS"/>
</dbReference>
<dbReference type="SMART" id="SM00840">
    <property type="entry name" value="DALR_2"/>
    <property type="match status" value="1"/>
</dbReference>
<dbReference type="SUPFAM" id="SSF47323">
    <property type="entry name" value="Anticodon-binding domain of a subclass of class I aminoacyl-tRNA synthetases"/>
    <property type="match status" value="1"/>
</dbReference>
<dbReference type="SUPFAM" id="SSF52374">
    <property type="entry name" value="Nucleotidylyl transferase"/>
    <property type="match status" value="1"/>
</dbReference>
<accession>A7Z0L6</accession>
<protein>
    <recommendedName>
        <fullName evidence="1">Cysteine--tRNA ligase</fullName>
        <ecNumber evidence="1">6.1.1.16</ecNumber>
    </recommendedName>
    <alternativeName>
        <fullName evidence="1">Cysteinyl-tRNA synthetase</fullName>
        <shortName evidence="1">CysRS</shortName>
    </alternativeName>
</protein>
<gene>
    <name evidence="1" type="primary">cysS</name>
    <name type="ordered locus">RBAM_001190</name>
</gene>
<evidence type="ECO:0000255" key="1">
    <source>
        <dbReference type="HAMAP-Rule" id="MF_00041"/>
    </source>
</evidence>
<reference key="1">
    <citation type="journal article" date="2007" name="Nat. Biotechnol.">
        <title>Comparative analysis of the complete genome sequence of the plant growth-promoting bacterium Bacillus amyloliquefaciens FZB42.</title>
        <authorList>
            <person name="Chen X.H."/>
            <person name="Koumoutsi A."/>
            <person name="Scholz R."/>
            <person name="Eisenreich A."/>
            <person name="Schneider K."/>
            <person name="Heinemeyer I."/>
            <person name="Morgenstern B."/>
            <person name="Voss B."/>
            <person name="Hess W.R."/>
            <person name="Reva O."/>
            <person name="Junge H."/>
            <person name="Voigt B."/>
            <person name="Jungblut P.R."/>
            <person name="Vater J."/>
            <person name="Suessmuth R."/>
            <person name="Liesegang H."/>
            <person name="Strittmatter A."/>
            <person name="Gottschalk G."/>
            <person name="Borriss R."/>
        </authorList>
    </citation>
    <scope>NUCLEOTIDE SEQUENCE [LARGE SCALE GENOMIC DNA]</scope>
    <source>
        <strain>DSM 23117 / BGSC 10A6 / LMG 26770 / FZB42</strain>
    </source>
</reference>
<feature type="chain" id="PRO_0000332787" description="Cysteine--tRNA ligase">
    <location>
        <begin position="1"/>
        <end position="466"/>
    </location>
</feature>
<feature type="short sequence motif" description="'HIGH' region">
    <location>
        <begin position="31"/>
        <end position="41"/>
    </location>
</feature>
<feature type="short sequence motif" description="'KMSKS' region">
    <location>
        <begin position="266"/>
        <end position="270"/>
    </location>
</feature>
<feature type="binding site" evidence="1">
    <location>
        <position position="29"/>
    </location>
    <ligand>
        <name>Zn(2+)</name>
        <dbReference type="ChEBI" id="CHEBI:29105"/>
    </ligand>
</feature>
<feature type="binding site" evidence="1">
    <location>
        <position position="209"/>
    </location>
    <ligand>
        <name>Zn(2+)</name>
        <dbReference type="ChEBI" id="CHEBI:29105"/>
    </ligand>
</feature>
<feature type="binding site" evidence="1">
    <location>
        <position position="234"/>
    </location>
    <ligand>
        <name>Zn(2+)</name>
        <dbReference type="ChEBI" id="CHEBI:29105"/>
    </ligand>
</feature>
<feature type="binding site" evidence="1">
    <location>
        <position position="238"/>
    </location>
    <ligand>
        <name>Zn(2+)</name>
        <dbReference type="ChEBI" id="CHEBI:29105"/>
    </ligand>
</feature>
<feature type="binding site" evidence="1">
    <location>
        <position position="269"/>
    </location>
    <ligand>
        <name>ATP</name>
        <dbReference type="ChEBI" id="CHEBI:30616"/>
    </ligand>
</feature>
<feature type="modified residue" description="Phosphoserine" evidence="1">
    <location>
        <position position="270"/>
    </location>
</feature>
<keyword id="KW-0030">Aminoacyl-tRNA synthetase</keyword>
<keyword id="KW-0067">ATP-binding</keyword>
<keyword id="KW-0963">Cytoplasm</keyword>
<keyword id="KW-0436">Ligase</keyword>
<keyword id="KW-0479">Metal-binding</keyword>
<keyword id="KW-0547">Nucleotide-binding</keyword>
<keyword id="KW-0597">Phosphoprotein</keyword>
<keyword id="KW-0648">Protein biosynthesis</keyword>
<keyword id="KW-0862">Zinc</keyword>
<name>SYC_BACVZ</name>
<proteinExistence type="inferred from homology"/>
<comment type="catalytic activity">
    <reaction evidence="1">
        <text>tRNA(Cys) + L-cysteine + ATP = L-cysteinyl-tRNA(Cys) + AMP + diphosphate</text>
        <dbReference type="Rhea" id="RHEA:17773"/>
        <dbReference type="Rhea" id="RHEA-COMP:9661"/>
        <dbReference type="Rhea" id="RHEA-COMP:9679"/>
        <dbReference type="ChEBI" id="CHEBI:30616"/>
        <dbReference type="ChEBI" id="CHEBI:33019"/>
        <dbReference type="ChEBI" id="CHEBI:35235"/>
        <dbReference type="ChEBI" id="CHEBI:78442"/>
        <dbReference type="ChEBI" id="CHEBI:78517"/>
        <dbReference type="ChEBI" id="CHEBI:456215"/>
        <dbReference type="EC" id="6.1.1.16"/>
    </reaction>
</comment>
<comment type="cofactor">
    <cofactor evidence="1">
        <name>Zn(2+)</name>
        <dbReference type="ChEBI" id="CHEBI:29105"/>
    </cofactor>
    <text evidence="1">Binds 1 zinc ion per subunit.</text>
</comment>
<comment type="subunit">
    <text evidence="1">Monomer.</text>
</comment>
<comment type="subcellular location">
    <subcellularLocation>
        <location evidence="1">Cytoplasm</location>
    </subcellularLocation>
</comment>
<comment type="similarity">
    <text evidence="1">Belongs to the class-I aminoacyl-tRNA synthetase family.</text>
</comment>
<sequence>MTITLYNTLTRKKETFVPLEEGKVKMYVCGPTVYNYIHIGNARPAIVYDTVRNYLEYKGYDVQYVSNFTDVDDKLIKAANELGEDVPTVSERFIKAYFEDVGALGCRKADLHPRVMENMDAIIEFVSELIKKGYAYESEGDVYFKTRAFEGYGKLSQQSIDELRSGARIRVGEKKEDALDFALWKAAKDGEISWDSPWGKGRPGWHIECSAMVKKYLGDEIDIHAGGQDLTFPHHENEIAQSEALTGKTFAKYWLHNGYINIDNEKMSKSLGNFVLVHDIIKQYDPQLLRFFMLSVHYRHPINYSEELLEKTKNAFNRLKTAYSNLNHRLISSTNLTDNDEEWLAKIEEHRTAFEEAMDDDFNTANAISVWFDLAKVANYYMQEDNTADHVIKAFISMFDRIGSVLGLTLGEEELVDEEIEELIEKRNEARRNRDFALSDQIRDQLKSMNIILEDTAQGTRWKRGE</sequence>
<organism>
    <name type="scientific">Bacillus velezensis (strain DSM 23117 / BGSC 10A6 / LMG 26770 / FZB42)</name>
    <name type="common">Bacillus amyloliquefaciens subsp. plantarum</name>
    <dbReference type="NCBI Taxonomy" id="326423"/>
    <lineage>
        <taxon>Bacteria</taxon>
        <taxon>Bacillati</taxon>
        <taxon>Bacillota</taxon>
        <taxon>Bacilli</taxon>
        <taxon>Bacillales</taxon>
        <taxon>Bacillaceae</taxon>
        <taxon>Bacillus</taxon>
        <taxon>Bacillus amyloliquefaciens group</taxon>
    </lineage>
</organism>